<gene>
    <name evidence="1" type="primary">fmt</name>
    <name type="ordered locus">Pmen_0054</name>
</gene>
<evidence type="ECO:0000255" key="1">
    <source>
        <dbReference type="HAMAP-Rule" id="MF_00182"/>
    </source>
</evidence>
<comment type="function">
    <text evidence="1">Attaches a formyl group to the free amino group of methionyl-tRNA(fMet). The formyl group appears to play a dual role in the initiator identity of N-formylmethionyl-tRNA by promoting its recognition by IF2 and preventing the misappropriation of this tRNA by the elongation apparatus.</text>
</comment>
<comment type="catalytic activity">
    <reaction evidence="1">
        <text>L-methionyl-tRNA(fMet) + (6R)-10-formyltetrahydrofolate = N-formyl-L-methionyl-tRNA(fMet) + (6S)-5,6,7,8-tetrahydrofolate + H(+)</text>
        <dbReference type="Rhea" id="RHEA:24380"/>
        <dbReference type="Rhea" id="RHEA-COMP:9952"/>
        <dbReference type="Rhea" id="RHEA-COMP:9953"/>
        <dbReference type="ChEBI" id="CHEBI:15378"/>
        <dbReference type="ChEBI" id="CHEBI:57453"/>
        <dbReference type="ChEBI" id="CHEBI:78530"/>
        <dbReference type="ChEBI" id="CHEBI:78844"/>
        <dbReference type="ChEBI" id="CHEBI:195366"/>
        <dbReference type="EC" id="2.1.2.9"/>
    </reaction>
</comment>
<comment type="similarity">
    <text evidence="1">Belongs to the Fmt family.</text>
</comment>
<keyword id="KW-0648">Protein biosynthesis</keyword>
<keyword id="KW-0808">Transferase</keyword>
<dbReference type="EC" id="2.1.2.9" evidence="1"/>
<dbReference type="EMBL" id="CP000680">
    <property type="protein sequence ID" value="ABP82828.1"/>
    <property type="molecule type" value="Genomic_DNA"/>
</dbReference>
<dbReference type="SMR" id="A4XNB2"/>
<dbReference type="STRING" id="399739.Pmen_0054"/>
<dbReference type="KEGG" id="pmy:Pmen_0054"/>
<dbReference type="PATRIC" id="fig|399739.8.peg.53"/>
<dbReference type="eggNOG" id="COG0223">
    <property type="taxonomic scope" value="Bacteria"/>
</dbReference>
<dbReference type="HOGENOM" id="CLU_033347_1_2_6"/>
<dbReference type="OrthoDB" id="9802815at2"/>
<dbReference type="GO" id="GO:0005829">
    <property type="term" value="C:cytosol"/>
    <property type="evidence" value="ECO:0007669"/>
    <property type="project" value="TreeGrafter"/>
</dbReference>
<dbReference type="GO" id="GO:0004479">
    <property type="term" value="F:methionyl-tRNA formyltransferase activity"/>
    <property type="evidence" value="ECO:0007669"/>
    <property type="project" value="UniProtKB-UniRule"/>
</dbReference>
<dbReference type="CDD" id="cd08646">
    <property type="entry name" value="FMT_core_Met-tRNA-FMT_N"/>
    <property type="match status" value="1"/>
</dbReference>
<dbReference type="CDD" id="cd08704">
    <property type="entry name" value="Met_tRNA_FMT_C"/>
    <property type="match status" value="1"/>
</dbReference>
<dbReference type="FunFam" id="3.40.50.170:FF:000003">
    <property type="entry name" value="Methionyl-tRNA formyltransferase"/>
    <property type="match status" value="1"/>
</dbReference>
<dbReference type="Gene3D" id="3.10.25.10">
    <property type="entry name" value="Formyl transferase, C-terminal domain"/>
    <property type="match status" value="1"/>
</dbReference>
<dbReference type="Gene3D" id="3.40.50.170">
    <property type="entry name" value="Formyl transferase, N-terminal domain"/>
    <property type="match status" value="1"/>
</dbReference>
<dbReference type="HAMAP" id="MF_00182">
    <property type="entry name" value="Formyl_trans"/>
    <property type="match status" value="1"/>
</dbReference>
<dbReference type="InterPro" id="IPR005794">
    <property type="entry name" value="Fmt"/>
</dbReference>
<dbReference type="InterPro" id="IPR005793">
    <property type="entry name" value="Formyl_trans_C"/>
</dbReference>
<dbReference type="InterPro" id="IPR037022">
    <property type="entry name" value="Formyl_trans_C_sf"/>
</dbReference>
<dbReference type="InterPro" id="IPR002376">
    <property type="entry name" value="Formyl_transf_N"/>
</dbReference>
<dbReference type="InterPro" id="IPR036477">
    <property type="entry name" value="Formyl_transf_N_sf"/>
</dbReference>
<dbReference type="InterPro" id="IPR011034">
    <property type="entry name" value="Formyl_transferase-like_C_sf"/>
</dbReference>
<dbReference type="InterPro" id="IPR001555">
    <property type="entry name" value="GART_AS"/>
</dbReference>
<dbReference type="InterPro" id="IPR044135">
    <property type="entry name" value="Met-tRNA-FMT_C"/>
</dbReference>
<dbReference type="InterPro" id="IPR041711">
    <property type="entry name" value="Met-tRNA-FMT_N"/>
</dbReference>
<dbReference type="NCBIfam" id="TIGR00460">
    <property type="entry name" value="fmt"/>
    <property type="match status" value="1"/>
</dbReference>
<dbReference type="PANTHER" id="PTHR11138">
    <property type="entry name" value="METHIONYL-TRNA FORMYLTRANSFERASE"/>
    <property type="match status" value="1"/>
</dbReference>
<dbReference type="PANTHER" id="PTHR11138:SF5">
    <property type="entry name" value="METHIONYL-TRNA FORMYLTRANSFERASE, MITOCHONDRIAL"/>
    <property type="match status" value="1"/>
</dbReference>
<dbReference type="Pfam" id="PF02911">
    <property type="entry name" value="Formyl_trans_C"/>
    <property type="match status" value="1"/>
</dbReference>
<dbReference type="Pfam" id="PF00551">
    <property type="entry name" value="Formyl_trans_N"/>
    <property type="match status" value="1"/>
</dbReference>
<dbReference type="SUPFAM" id="SSF50486">
    <property type="entry name" value="FMT C-terminal domain-like"/>
    <property type="match status" value="1"/>
</dbReference>
<dbReference type="SUPFAM" id="SSF53328">
    <property type="entry name" value="Formyltransferase"/>
    <property type="match status" value="1"/>
</dbReference>
<dbReference type="PROSITE" id="PS00373">
    <property type="entry name" value="GART"/>
    <property type="match status" value="1"/>
</dbReference>
<organism>
    <name type="scientific">Ectopseudomonas mendocina (strain ymp)</name>
    <name type="common">Pseudomonas mendocina</name>
    <dbReference type="NCBI Taxonomy" id="399739"/>
    <lineage>
        <taxon>Bacteria</taxon>
        <taxon>Pseudomonadati</taxon>
        <taxon>Pseudomonadota</taxon>
        <taxon>Gammaproteobacteria</taxon>
        <taxon>Pseudomonadales</taxon>
        <taxon>Pseudomonadaceae</taxon>
        <taxon>Ectopseudomonas</taxon>
    </lineage>
</organism>
<reference key="1">
    <citation type="submission" date="2007-04" db="EMBL/GenBank/DDBJ databases">
        <title>Complete sequence of Pseudomonas mendocina ymp.</title>
        <authorList>
            <consortium name="US DOE Joint Genome Institute"/>
            <person name="Copeland A."/>
            <person name="Lucas S."/>
            <person name="Lapidus A."/>
            <person name="Barry K."/>
            <person name="Glavina del Rio T."/>
            <person name="Dalin E."/>
            <person name="Tice H."/>
            <person name="Pitluck S."/>
            <person name="Kiss H."/>
            <person name="Brettin T."/>
            <person name="Detter J.C."/>
            <person name="Bruce D."/>
            <person name="Han C."/>
            <person name="Schmutz J."/>
            <person name="Larimer F."/>
            <person name="Land M."/>
            <person name="Hauser L."/>
            <person name="Kyrpides N."/>
            <person name="Mikhailova N."/>
            <person name="Hersman L."/>
            <person name="Dubois J."/>
            <person name="Maurice P."/>
            <person name="Richardson P."/>
        </authorList>
    </citation>
    <scope>NUCLEOTIDE SEQUENCE [LARGE SCALE GENOMIC DNA]</scope>
    <source>
        <strain>ymp</strain>
    </source>
</reference>
<feature type="chain" id="PRO_1000020133" description="Methionyl-tRNA formyltransferase">
    <location>
        <begin position="1"/>
        <end position="314"/>
    </location>
</feature>
<feature type="binding site" evidence="1">
    <location>
        <begin position="113"/>
        <end position="116"/>
    </location>
    <ligand>
        <name>(6S)-5,6,7,8-tetrahydrofolate</name>
        <dbReference type="ChEBI" id="CHEBI:57453"/>
    </ligand>
</feature>
<protein>
    <recommendedName>
        <fullName evidence="1">Methionyl-tRNA formyltransferase</fullName>
        <ecNumber evidence="1">2.1.2.9</ecNumber>
    </recommendedName>
</protein>
<sequence length="314" mass="33356">MPDSLRIVFAGTPEFAAEHLKALLASQHEVIAVYTQPDRPAGRGQKLMPSPVKQLAVEHGIPVHQPASLRNEEAQAELAALKPDLMVVVAYGLILPQVVLDTPRLGCINSHASLLPRWRGAAPIQRAVQAGDLESGVTVMQMEAGLDTGPMLLKVSTPISAEDTGGSLHDRLARLGPQAVLQAIDGLAAGTLIGELQDDAQANYAHKLNKDEARLDFSRPAVELERLIRAFHPWPICHTTLNGDALKVHAAELGEGSGAPGTILAADKNGLTVACGEGALRLTRLQLPGGKPLAFSDLYNSRREQFAPGLVLGQ</sequence>
<accession>A4XNB2</accession>
<proteinExistence type="inferred from homology"/>
<name>FMT_ECTM1</name>